<name>RS4_CYAP4</name>
<protein>
    <recommendedName>
        <fullName evidence="1">Small ribosomal subunit protein uS4</fullName>
    </recommendedName>
    <alternativeName>
        <fullName evidence="3">30S ribosomal protein S4</fullName>
    </alternativeName>
</protein>
<dbReference type="EMBL" id="CP001344">
    <property type="protein sequence ID" value="ACL43390.1"/>
    <property type="molecule type" value="Genomic_DNA"/>
</dbReference>
<dbReference type="SMR" id="B8HXV1"/>
<dbReference type="STRING" id="395961.Cyan7425_1004"/>
<dbReference type="KEGG" id="cyn:Cyan7425_1004"/>
<dbReference type="eggNOG" id="COG0522">
    <property type="taxonomic scope" value="Bacteria"/>
</dbReference>
<dbReference type="HOGENOM" id="CLU_092403_0_5_3"/>
<dbReference type="OrthoDB" id="9803672at2"/>
<dbReference type="GO" id="GO:0015935">
    <property type="term" value="C:small ribosomal subunit"/>
    <property type="evidence" value="ECO:0007669"/>
    <property type="project" value="InterPro"/>
</dbReference>
<dbReference type="GO" id="GO:0019843">
    <property type="term" value="F:rRNA binding"/>
    <property type="evidence" value="ECO:0007669"/>
    <property type="project" value="UniProtKB-UniRule"/>
</dbReference>
<dbReference type="GO" id="GO:0003735">
    <property type="term" value="F:structural constituent of ribosome"/>
    <property type="evidence" value="ECO:0007669"/>
    <property type="project" value="InterPro"/>
</dbReference>
<dbReference type="GO" id="GO:0042274">
    <property type="term" value="P:ribosomal small subunit biogenesis"/>
    <property type="evidence" value="ECO:0007669"/>
    <property type="project" value="TreeGrafter"/>
</dbReference>
<dbReference type="GO" id="GO:0006412">
    <property type="term" value="P:translation"/>
    <property type="evidence" value="ECO:0007669"/>
    <property type="project" value="UniProtKB-UniRule"/>
</dbReference>
<dbReference type="CDD" id="cd00165">
    <property type="entry name" value="S4"/>
    <property type="match status" value="1"/>
</dbReference>
<dbReference type="FunFam" id="3.10.290.10:FF:000001">
    <property type="entry name" value="30S ribosomal protein S4"/>
    <property type="match status" value="1"/>
</dbReference>
<dbReference type="FunFam" id="1.10.1050.10:FF:000002">
    <property type="entry name" value="30S ribosomal protein S4, chloroplastic"/>
    <property type="match status" value="1"/>
</dbReference>
<dbReference type="Gene3D" id="1.10.1050.10">
    <property type="entry name" value="Ribosomal Protein S4 Delta 41, Chain A, domain 1"/>
    <property type="match status" value="1"/>
</dbReference>
<dbReference type="Gene3D" id="3.10.290.10">
    <property type="entry name" value="RNA-binding S4 domain"/>
    <property type="match status" value="1"/>
</dbReference>
<dbReference type="HAMAP" id="MF_01306_B">
    <property type="entry name" value="Ribosomal_uS4_B"/>
    <property type="match status" value="1"/>
</dbReference>
<dbReference type="InterPro" id="IPR022801">
    <property type="entry name" value="Ribosomal_uS4"/>
</dbReference>
<dbReference type="InterPro" id="IPR005709">
    <property type="entry name" value="Ribosomal_uS4_bac-type"/>
</dbReference>
<dbReference type="InterPro" id="IPR018079">
    <property type="entry name" value="Ribosomal_uS4_CS"/>
</dbReference>
<dbReference type="InterPro" id="IPR001912">
    <property type="entry name" value="Ribosomal_uS4_N"/>
</dbReference>
<dbReference type="InterPro" id="IPR002942">
    <property type="entry name" value="S4_RNA-bd"/>
</dbReference>
<dbReference type="InterPro" id="IPR036986">
    <property type="entry name" value="S4_RNA-bd_sf"/>
</dbReference>
<dbReference type="NCBIfam" id="NF003717">
    <property type="entry name" value="PRK05327.1"/>
    <property type="match status" value="1"/>
</dbReference>
<dbReference type="NCBIfam" id="TIGR01017">
    <property type="entry name" value="rpsD_bact"/>
    <property type="match status" value="1"/>
</dbReference>
<dbReference type="PANTHER" id="PTHR11831">
    <property type="entry name" value="30S 40S RIBOSOMAL PROTEIN"/>
    <property type="match status" value="1"/>
</dbReference>
<dbReference type="PANTHER" id="PTHR11831:SF4">
    <property type="entry name" value="SMALL RIBOSOMAL SUBUNIT PROTEIN US4M"/>
    <property type="match status" value="1"/>
</dbReference>
<dbReference type="Pfam" id="PF00163">
    <property type="entry name" value="Ribosomal_S4"/>
    <property type="match status" value="1"/>
</dbReference>
<dbReference type="Pfam" id="PF01479">
    <property type="entry name" value="S4"/>
    <property type="match status" value="1"/>
</dbReference>
<dbReference type="SMART" id="SM01390">
    <property type="entry name" value="Ribosomal_S4"/>
    <property type="match status" value="1"/>
</dbReference>
<dbReference type="SMART" id="SM00363">
    <property type="entry name" value="S4"/>
    <property type="match status" value="1"/>
</dbReference>
<dbReference type="SUPFAM" id="SSF55174">
    <property type="entry name" value="Alpha-L RNA-binding motif"/>
    <property type="match status" value="1"/>
</dbReference>
<dbReference type="PROSITE" id="PS00632">
    <property type="entry name" value="RIBOSOMAL_S4"/>
    <property type="match status" value="1"/>
</dbReference>
<dbReference type="PROSITE" id="PS50889">
    <property type="entry name" value="S4"/>
    <property type="match status" value="1"/>
</dbReference>
<feature type="chain" id="PRO_1000165397" description="Small ribosomal subunit protein uS4">
    <location>
        <begin position="1"/>
        <end position="204"/>
    </location>
</feature>
<feature type="domain" description="S4 RNA-binding" evidence="1">
    <location>
        <begin position="92"/>
        <end position="152"/>
    </location>
</feature>
<feature type="region of interest" description="Disordered" evidence="2">
    <location>
        <begin position="25"/>
        <end position="45"/>
    </location>
</feature>
<keyword id="KW-0687">Ribonucleoprotein</keyword>
<keyword id="KW-0689">Ribosomal protein</keyword>
<keyword id="KW-0694">RNA-binding</keyword>
<keyword id="KW-0699">rRNA-binding</keyword>
<accession>B8HXV1</accession>
<evidence type="ECO:0000255" key="1">
    <source>
        <dbReference type="HAMAP-Rule" id="MF_01306"/>
    </source>
</evidence>
<evidence type="ECO:0000256" key="2">
    <source>
        <dbReference type="SAM" id="MobiDB-lite"/>
    </source>
</evidence>
<evidence type="ECO:0000305" key="3"/>
<organism>
    <name type="scientific">Cyanothece sp. (strain PCC 7425 / ATCC 29141)</name>
    <dbReference type="NCBI Taxonomy" id="395961"/>
    <lineage>
        <taxon>Bacteria</taxon>
        <taxon>Bacillati</taxon>
        <taxon>Cyanobacteriota</taxon>
        <taxon>Cyanophyceae</taxon>
        <taxon>Gomontiellales</taxon>
        <taxon>Cyanothecaceae</taxon>
        <taxon>Cyanothece</taxon>
    </lineage>
</organism>
<sequence>MARYRGPRLRVIRRLGDLPGLTRKAVPSRRAYPPGQHGQARKKRSEYAMRLEEKQKLRFNYGLTERQLVRYVRRARRVSGSTGLALLQLLEMRLDNIIFRLGMAPTIPAARQLVNHGHVTVNGRVVSIPSYQCRPGNEIGIRNKENSRRLAEENLKFPGLANLPTHLELDKNKLMAKVNSVVEREWVALQVNELLVVEYYSRKV</sequence>
<reference key="1">
    <citation type="journal article" date="2011" name="MBio">
        <title>Novel metabolic attributes of the genus Cyanothece, comprising a group of unicellular nitrogen-fixing Cyanobacteria.</title>
        <authorList>
            <person name="Bandyopadhyay A."/>
            <person name="Elvitigala T."/>
            <person name="Welsh E."/>
            <person name="Stockel J."/>
            <person name="Liberton M."/>
            <person name="Min H."/>
            <person name="Sherman L.A."/>
            <person name="Pakrasi H.B."/>
        </authorList>
    </citation>
    <scope>NUCLEOTIDE SEQUENCE [LARGE SCALE GENOMIC DNA]</scope>
    <source>
        <strain>PCC 7425 / ATCC 29141</strain>
    </source>
</reference>
<proteinExistence type="inferred from homology"/>
<gene>
    <name evidence="1" type="primary">rpsD</name>
    <name evidence="1" type="synonym">rps4</name>
    <name type="ordered locus">Cyan7425_1004</name>
</gene>
<comment type="function">
    <text evidence="1">One of the primary rRNA binding proteins, it binds directly to 16S rRNA where it nucleates assembly of the body of the 30S subunit.</text>
</comment>
<comment type="function">
    <text evidence="1">With S5 and S12 plays an important role in translational accuracy.</text>
</comment>
<comment type="subunit">
    <text evidence="1">Part of the 30S ribosomal subunit. Contacts protein S5. The interaction surface between S4 and S5 is involved in control of translational fidelity.</text>
</comment>
<comment type="similarity">
    <text evidence="1">Belongs to the universal ribosomal protein uS4 family.</text>
</comment>